<protein>
    <recommendedName>
        <fullName>Anthocyanidin 3-O-glucoside 2'''-O-xylosyltransferase</fullName>
        <shortName>A3G2''XylT</shortName>
        <ecNumber>2.4.2.51</ecNumber>
    </recommendedName>
</protein>
<organism>
    <name type="scientific">Arabidopsis thaliana</name>
    <name type="common">Mouse-ear cress</name>
    <dbReference type="NCBI Taxonomy" id="3702"/>
    <lineage>
        <taxon>Eukaryota</taxon>
        <taxon>Viridiplantae</taxon>
        <taxon>Streptophyta</taxon>
        <taxon>Embryophyta</taxon>
        <taxon>Tracheophyta</taxon>
        <taxon>Spermatophyta</taxon>
        <taxon>Magnoliopsida</taxon>
        <taxon>eudicotyledons</taxon>
        <taxon>Gunneridae</taxon>
        <taxon>Pentapetalae</taxon>
        <taxon>rosids</taxon>
        <taxon>malvids</taxon>
        <taxon>Brassicales</taxon>
        <taxon>Brassicaceae</taxon>
        <taxon>Camelineae</taxon>
        <taxon>Arabidopsis</taxon>
    </lineage>
</organism>
<gene>
    <name type="primary">A3G2XYLT</name>
    <name type="synonym">UF3GT</name>
    <name type="synonym">UFGT</name>
    <name type="synonym">UGT79B1</name>
    <name type="ordered locus">At5g54060</name>
    <name type="ORF">MJP23.2</name>
</gene>
<proteinExistence type="evidence at protein level"/>
<keyword id="KW-0119">Carbohydrate metabolism</keyword>
<keyword id="KW-0284">Flavonoid biosynthesis</keyword>
<keyword id="KW-1185">Reference proteome</keyword>
<keyword id="KW-0808">Transferase</keyword>
<keyword id="KW-0859">Xylose metabolism</keyword>
<dbReference type="EC" id="2.4.2.51"/>
<dbReference type="EMBL" id="AB018115">
    <property type="protein sequence ID" value="BAA97127.1"/>
    <property type="molecule type" value="Genomic_DNA"/>
</dbReference>
<dbReference type="EMBL" id="CP002688">
    <property type="protein sequence ID" value="AED96443.1"/>
    <property type="molecule type" value="Genomic_DNA"/>
</dbReference>
<dbReference type="EMBL" id="BT033073">
    <property type="protein sequence ID" value="ACE82596.1"/>
    <property type="molecule type" value="mRNA"/>
</dbReference>
<dbReference type="RefSeq" id="NP_200217.1">
    <property type="nucleotide sequence ID" value="NM_124785.3"/>
</dbReference>
<dbReference type="SMR" id="Q9LVW3"/>
<dbReference type="FunCoup" id="Q9LVW3">
    <property type="interactions" value="3"/>
</dbReference>
<dbReference type="STRING" id="3702.Q9LVW3"/>
<dbReference type="CAZy" id="GT1">
    <property type="family name" value="Glycosyltransferase Family 1"/>
</dbReference>
<dbReference type="PaxDb" id="3702-AT5G54060.1"/>
<dbReference type="ProteomicsDB" id="241164"/>
<dbReference type="EnsemblPlants" id="AT5G54060.1">
    <property type="protein sequence ID" value="AT5G54060.1"/>
    <property type="gene ID" value="AT5G54060"/>
</dbReference>
<dbReference type="GeneID" id="835489"/>
<dbReference type="Gramene" id="AT5G54060.1">
    <property type="protein sequence ID" value="AT5G54060.1"/>
    <property type="gene ID" value="AT5G54060"/>
</dbReference>
<dbReference type="KEGG" id="ath:AT5G54060"/>
<dbReference type="Araport" id="AT5G54060"/>
<dbReference type="TAIR" id="AT5G54060">
    <property type="gene designation" value="UF3GT"/>
</dbReference>
<dbReference type="eggNOG" id="KOG1192">
    <property type="taxonomic scope" value="Eukaryota"/>
</dbReference>
<dbReference type="HOGENOM" id="CLU_001724_2_3_1"/>
<dbReference type="InParanoid" id="Q9LVW3"/>
<dbReference type="OMA" id="FYDSAHW"/>
<dbReference type="PhylomeDB" id="Q9LVW3"/>
<dbReference type="BioCyc" id="ARA:AT5G54060-MONOMER"/>
<dbReference type="BioCyc" id="MetaCyc:MONOMER-18502"/>
<dbReference type="BRENDA" id="2.4.2.51">
    <property type="organism ID" value="399"/>
</dbReference>
<dbReference type="UniPathway" id="UPA00154"/>
<dbReference type="PRO" id="PR:Q9LVW3"/>
<dbReference type="Proteomes" id="UP000006548">
    <property type="component" value="Chromosome 5"/>
</dbReference>
<dbReference type="ExpressionAtlas" id="Q9LVW3">
    <property type="expression patterns" value="baseline and differential"/>
</dbReference>
<dbReference type="GO" id="GO:0102580">
    <property type="term" value="F:cyanidin 3-O-glucoside 2-O''-xylosyltransferase activity"/>
    <property type="evidence" value="ECO:0007669"/>
    <property type="project" value="UniProtKB-EC"/>
</dbReference>
<dbReference type="GO" id="GO:0035251">
    <property type="term" value="F:UDP-glucosyltransferase activity"/>
    <property type="evidence" value="ECO:0007669"/>
    <property type="project" value="InterPro"/>
</dbReference>
<dbReference type="GO" id="GO:0035252">
    <property type="term" value="F:UDP-xylosyltransferase activity"/>
    <property type="evidence" value="ECO:0000314"/>
    <property type="project" value="TAIR"/>
</dbReference>
<dbReference type="GO" id="GO:0009718">
    <property type="term" value="P:anthocyanin-containing compound biosynthetic process"/>
    <property type="evidence" value="ECO:0000315"/>
    <property type="project" value="TAIR"/>
</dbReference>
<dbReference type="GO" id="GO:0071368">
    <property type="term" value="P:cellular response to cytokinin stimulus"/>
    <property type="evidence" value="ECO:0000270"/>
    <property type="project" value="UniProtKB"/>
</dbReference>
<dbReference type="GO" id="GO:0071395">
    <property type="term" value="P:cellular response to jasmonic acid stimulus"/>
    <property type="evidence" value="ECO:0000270"/>
    <property type="project" value="UniProtKB"/>
</dbReference>
<dbReference type="GO" id="GO:1901038">
    <property type="term" value="P:cyanidin 3-O-glucoside metabolic process"/>
    <property type="evidence" value="ECO:0000315"/>
    <property type="project" value="TAIR"/>
</dbReference>
<dbReference type="GO" id="GO:0042732">
    <property type="term" value="P:D-xylose metabolic process"/>
    <property type="evidence" value="ECO:0007669"/>
    <property type="project" value="UniProtKB-KW"/>
</dbReference>
<dbReference type="CDD" id="cd03784">
    <property type="entry name" value="GT1_Gtf-like"/>
    <property type="match status" value="1"/>
</dbReference>
<dbReference type="FunFam" id="3.40.50.2000:FF:000037">
    <property type="entry name" value="Glycosyltransferase"/>
    <property type="match status" value="1"/>
</dbReference>
<dbReference type="FunFam" id="3.40.50.2000:FF:000087">
    <property type="entry name" value="Glycosyltransferase"/>
    <property type="match status" value="1"/>
</dbReference>
<dbReference type="Gene3D" id="3.40.50.2000">
    <property type="entry name" value="Glycogen Phosphorylase B"/>
    <property type="match status" value="2"/>
</dbReference>
<dbReference type="InterPro" id="IPR050481">
    <property type="entry name" value="UDP-glycosyltransf_plant"/>
</dbReference>
<dbReference type="InterPro" id="IPR002213">
    <property type="entry name" value="UDP_glucos_trans"/>
</dbReference>
<dbReference type="InterPro" id="IPR035595">
    <property type="entry name" value="UDP_glycos_trans_CS"/>
</dbReference>
<dbReference type="PANTHER" id="PTHR48049:SF176">
    <property type="entry name" value="ANTHOCYANIDIN 3-O-GLUCOSIDE 2'''-O-XYLOSYLTRANSFERASE-RELATED"/>
    <property type="match status" value="1"/>
</dbReference>
<dbReference type="PANTHER" id="PTHR48049">
    <property type="entry name" value="GLYCOSYLTRANSFERASE"/>
    <property type="match status" value="1"/>
</dbReference>
<dbReference type="Pfam" id="PF00201">
    <property type="entry name" value="UDPGT"/>
    <property type="match status" value="1"/>
</dbReference>
<dbReference type="SUPFAM" id="SSF53756">
    <property type="entry name" value="UDP-Glycosyltransferase/glycogen phosphorylase"/>
    <property type="match status" value="1"/>
</dbReference>
<dbReference type="PROSITE" id="PS00375">
    <property type="entry name" value="UDPGT"/>
    <property type="match status" value="1"/>
</dbReference>
<reference key="1">
    <citation type="journal article" date="2000" name="DNA Res.">
        <title>Structural analysis of Arabidopsis thaliana chromosome 5. X. Sequence features of the regions of 3,076,755 bp covered by sixty P1 and TAC clones.</title>
        <authorList>
            <person name="Sato S."/>
            <person name="Nakamura Y."/>
            <person name="Kaneko T."/>
            <person name="Katoh T."/>
            <person name="Asamizu E."/>
            <person name="Kotani H."/>
            <person name="Tabata S."/>
        </authorList>
    </citation>
    <scope>NUCLEOTIDE SEQUENCE [LARGE SCALE GENOMIC DNA]</scope>
    <source>
        <strain>cv. Columbia</strain>
    </source>
</reference>
<reference key="2">
    <citation type="journal article" date="2017" name="Plant J.">
        <title>Araport11: a complete reannotation of the Arabidopsis thaliana reference genome.</title>
        <authorList>
            <person name="Cheng C.Y."/>
            <person name="Krishnakumar V."/>
            <person name="Chan A.P."/>
            <person name="Thibaud-Nissen F."/>
            <person name="Schobel S."/>
            <person name="Town C.D."/>
        </authorList>
    </citation>
    <scope>GENOME REANNOTATION</scope>
    <source>
        <strain>cv. Columbia</strain>
    </source>
</reference>
<reference key="3">
    <citation type="submission" date="2008-06" db="EMBL/GenBank/DDBJ databases">
        <title>Arabidopsis ORF clones.</title>
        <authorList>
            <person name="De Los Reyes C."/>
            <person name="Quan R."/>
            <person name="Chen H."/>
            <person name="Bautista V.R."/>
            <person name="Kim C.J."/>
            <person name="Ecker J.R."/>
        </authorList>
    </citation>
    <scope>NUCLEOTIDE SEQUENCE [LARGE SCALE MRNA]</scope>
    <source>
        <strain>cv. Columbia</strain>
    </source>
</reference>
<reference key="4">
    <citation type="journal article" date="2001" name="J. Biol. Chem.">
        <title>Phylogenetic analysis of the UDP-glycosyltransferase multigene family of Arabidopsis thaliana.</title>
        <authorList>
            <person name="Li Y."/>
            <person name="Baldauf S."/>
            <person name="Lim E.K."/>
            <person name="Bowles D.J."/>
        </authorList>
    </citation>
    <scope>GENE FAMILY</scope>
</reference>
<reference key="5">
    <citation type="journal article" date="2006" name="Plant Physiol.">
        <title>Sucrose-specific induction of the anthocyanin biosynthetic pathway in Arabidopsis.</title>
        <authorList>
            <person name="Solfanelli C."/>
            <person name="Poggi A."/>
            <person name="Loreti E."/>
            <person name="Alpi A."/>
            <person name="Perata P."/>
        </authorList>
    </citation>
    <scope>INDUCTION BY SUCROSE</scope>
</reference>
<reference key="6">
    <citation type="journal article" date="2009" name="J. Exp. Bot.">
        <title>Molecular mechanism for jasmonate-induction of anthocyanin accumulation in Arabidopsis.</title>
        <authorList>
            <person name="Shan X."/>
            <person name="Zhang Y."/>
            <person name="Peng W."/>
            <person name="Wang Z."/>
            <person name="Xie D."/>
        </authorList>
    </citation>
    <scope>INDUCTION BY JASMONIC ACID</scope>
</reference>
<reference key="7">
    <citation type="journal article" date="2011" name="J. Integr. Plant Biol.">
        <title>Brassinosteroid enhances jasmonate-induced anthocyanin accumulation in Arabidopsis seedlings.</title>
        <authorList>
            <person name="Peng Z."/>
            <person name="Han C."/>
            <person name="Yuan L."/>
            <person name="Zhang K."/>
            <person name="Huang H."/>
            <person name="Ren C."/>
        </authorList>
    </citation>
    <scope>INDUCTION BY JASMONIC ACID</scope>
</reference>
<reference key="8">
    <citation type="journal article" date="2012" name="Mol. Cells">
        <title>Cytokinins enhance sugar-induced anthocyanin biosynthesis in Arabidopsis.</title>
        <authorList>
            <person name="Das P.K."/>
            <person name="Shin D.H."/>
            <person name="Choi S.B."/>
            <person name="Yoo S.D."/>
            <person name="Choi G."/>
            <person name="Park Y.I."/>
        </authorList>
    </citation>
    <scope>INDUCTION BY CYTOKININ</scope>
</reference>
<reference key="9">
    <citation type="journal article" date="2012" name="Plant J.">
        <title>Two glycosyltransferases involved in anthocyanin modification delineated by transcriptome independent component analysis in Arabidopsis thaliana.</title>
        <authorList>
            <person name="Yonekura-Sakakibara K."/>
            <person name="Fukushima A."/>
            <person name="Nakabayashi R."/>
            <person name="Hanada K."/>
            <person name="Matsuda F."/>
            <person name="Sugawara S."/>
            <person name="Inoue E."/>
            <person name="Kuromori T."/>
            <person name="Ito T."/>
            <person name="Shinozaki K."/>
            <person name="Wangwattana B."/>
            <person name="Yamazaki M."/>
            <person name="Saito K."/>
        </authorList>
    </citation>
    <scope>FUNCTION</scope>
    <scope>DISRUPTION PHENOTYPE</scope>
    <scope>CATALYTIC ACTIVITY</scope>
</reference>
<reference key="10">
    <citation type="journal article" date="2013" name="Plant Physiol. Biochem.">
        <title>The flavonoid biosynthetic pathway in Arabidopsis: Structural and genetic diversity.</title>
        <authorList>
            <person name="Saito K."/>
            <person name="Yonekura-Sakakibara K."/>
            <person name="Nakabayashi R."/>
            <person name="Higashi Y."/>
            <person name="Yamazaki M."/>
            <person name="Tohge T."/>
            <person name="Fernie A.R."/>
        </authorList>
    </citation>
    <scope>REVIEW</scope>
    <scope>NOMENCLATURE</scope>
</reference>
<name>AXYLT_ARATH</name>
<evidence type="ECO:0000250" key="1"/>
<evidence type="ECO:0000269" key="2">
    <source>
    </source>
</evidence>
<evidence type="ECO:0000269" key="3">
    <source>
    </source>
</evidence>
<evidence type="ECO:0000269" key="4">
    <source>
    </source>
</evidence>
<evidence type="ECO:0000269" key="5">
    <source>
    </source>
</evidence>
<evidence type="ECO:0000269" key="6">
    <source>
    </source>
</evidence>
<evidence type="ECO:0000305" key="7"/>
<feature type="chain" id="PRO_0000409107" description="Anthocyanidin 3-O-glucoside 2'''-O-xylosyltransferase">
    <location>
        <begin position="1"/>
        <end position="468"/>
    </location>
</feature>
<feature type="binding site" evidence="1">
    <location>
        <position position="284"/>
    </location>
    <ligand>
        <name>UDP-alpha-D-xylose</name>
        <dbReference type="ChEBI" id="CHEBI:57632"/>
    </ligand>
</feature>
<feature type="binding site" evidence="1">
    <location>
        <begin position="344"/>
        <end position="346"/>
    </location>
    <ligand>
        <name>UDP-alpha-D-xylose</name>
        <dbReference type="ChEBI" id="CHEBI:57632"/>
    </ligand>
</feature>
<feature type="binding site" evidence="1">
    <location>
        <begin position="361"/>
        <end position="369"/>
    </location>
    <ligand>
        <name>UDP-alpha-D-xylose</name>
        <dbReference type="ChEBI" id="CHEBI:57632"/>
    </ligand>
</feature>
<feature type="binding site" evidence="1">
    <location>
        <begin position="383"/>
        <end position="386"/>
    </location>
    <ligand>
        <name>UDP-alpha-D-xylose</name>
        <dbReference type="ChEBI" id="CHEBI:57632"/>
    </ligand>
</feature>
<comment type="function">
    <text evidence="5">Contributes to the last few anthocyanin biosynthetic steps. Converts cyanidin 3-O-glucoside to cyanidin 3-O-xylosyl(1-&gt;2)glucoside. Can use 3-O-glucosylated anthocyanidins/flavonols and uridine diphosphate (UDP)-xylose as substrates.</text>
</comment>
<comment type="catalytic activity">
    <reaction evidence="5">
        <text>an anthocyanidin 3-O-beta-D-glucoside + UDP-alpha-D-xylose = an anthocyanidin 3-O-beta-D-sambubioside + UDP + 2 H(+)</text>
        <dbReference type="Rhea" id="RHEA:35443"/>
        <dbReference type="ChEBI" id="CHEBI:15378"/>
        <dbReference type="ChEBI" id="CHEBI:16307"/>
        <dbReference type="ChEBI" id="CHEBI:57632"/>
        <dbReference type="ChEBI" id="CHEBI:58223"/>
        <dbReference type="ChEBI" id="CHEBI:77945"/>
        <dbReference type="EC" id="2.4.2.51"/>
    </reaction>
</comment>
<comment type="pathway">
    <text>Secondary metabolite biosynthesis; flavonoid biosynthesis.</text>
</comment>
<comment type="induction">
    <text evidence="2 3 4 6">By sucrose and cytokinin. Induced by jasmonic acid (JA) in a COI1- and brassinosteroids-dependent manner.</text>
</comment>
<comment type="disruption phenotype">
    <text evidence="5">Strong reduction in anthocyanin accumulation.</text>
</comment>
<comment type="similarity">
    <text evidence="7">Belongs to the UDP-glycosyltransferase family.</text>
</comment>
<sequence>MGVFGSNESSSMSIVMYPWLAFGHMTPFLHLSNKLAEKGHKIVFLLPKKALNQLEPLNLYPNLITFHTISIPQVKGLPPGAETNSDVPFFLTHLLAVAMDQTRPEVETIFRTIKPDLVFYDSAHWIPEIAKPIGAKTVCFNIVSAASIALSLVPSAEREVIDGKEMSGEELAKTPLGYPSSKVVLRPHEAKSLSFVWRKHEAIGSFFDGKVTAMRNCDAIAIRTCRETEGKFCDYISRQYSKPVYLTGPVLPGSQPNQPSLDPQWAEWLAKFNHGSVVFCAFGSQPVVNKIDQFQELCLGLESTGFPFLVAIKPPSGVSTVEEALPEGFKERVQGRGVVFGGWIQQPLVLNHPSVGCFVSHCGFGSMWESLMSDCQIVLVPQHGEQILNARLMTEEMEVAVEVEREKKGWFSRQSLENAVKSVMEEGSEIGEKVRKNHDKWRCVLTDSGFSDGYIDKFEQNLIELVKS</sequence>
<accession>Q9LVW3</accession>